<sequence length="946" mass="104411">MAGDAVQSEPRSWSLLEQLGLAGADLAAPGVQQQLELERERLKREIRKELKLKEGAENLRRATTDLGRSLAPVELLLRGSARRLDLLHQQLQELHAHVVLPDPAAGSDATQSLAEGSPICSSTNLSRVAGLEKQLAIELKVKQGAENMIQTYSNGSSKDRKLLLTAQQMLQDSKTKIDIIRMQLRRALQALQAGELESQAAPDEAQGDPELGAVELRIEELRHHFRVEHAVAEGAKNVLRLLSGAKAPDRKAVSEAQEKLTESNQKLGLLRESLERRLGELPADHPKGRLLREELTAASSSAFSAILPGPFPATHYSTLSKPAPLTGTLEVRVVGCKNLPETIPWSPPPSVGASGTPESRTPFLSRPARGLYSRSGSLSGRSSLRGEAENATEVSTVLKLDNTVVGQTAWKPCGPNAWDQSFTLELERARELELAVFWRDQRGLCALKFLKLEDFLDNERHEVQLDMEPQGCLVAEVTFRNPIIERIPRLQRQKKIFSKQQGKAFQRARQMNIDVATWVRLLRRLIPSAVATGTFSPNASPGAEIRHTGDISMEKLNLGADSDSSSQKSPPGLPSTSCSLSSPTHESTTSPELPSETQETPGPGLCSPLRKSPLTLEDFKFLAVLGRGHFGKVLLSEFRSSGELFAIKALKKGDIVARDEVESLMCEKRILAAVTRAGHPFLVNLFGCFQTPEHVCFVMEYSAGGDLMLHIHSDVFSEPRAVFYSACVVLGLQFLHEHKIVYRDLKLDNLLLDTEGYVKIADFGLCKEGMGYGDRTSTFCGTPEFLAPEVLTDTSYTRAVDWWGLGVLLYEMLVGESPFPGDDEEEVFDSIVNDEVRYPRFLSAEAIGIMRRLLRRNPERRLGSTERDAEDVKKQPFFRSLGWDVLLARRLPPPFVPTLSGRTDVSNFDEEFTGEAPTLSPPRDARPLTAAEQAAFRDFDFVAGGY</sequence>
<proteinExistence type="evidence at protein level"/>
<accession>P70268</accession>
<accession>Q3UEA6</accession>
<accession>Q7TST2</accession>
<accession>Q8BTL8</accession>
<reference key="1">
    <citation type="journal article" date="2005" name="Science">
        <title>The transcriptional landscape of the mammalian genome.</title>
        <authorList>
            <person name="Carninci P."/>
            <person name="Kasukawa T."/>
            <person name="Katayama S."/>
            <person name="Gough J."/>
            <person name="Frith M.C."/>
            <person name="Maeda N."/>
            <person name="Oyama R."/>
            <person name="Ravasi T."/>
            <person name="Lenhard B."/>
            <person name="Wells C."/>
            <person name="Kodzius R."/>
            <person name="Shimokawa K."/>
            <person name="Bajic V.B."/>
            <person name="Brenner S.E."/>
            <person name="Batalov S."/>
            <person name="Forrest A.R."/>
            <person name="Zavolan M."/>
            <person name="Davis M.J."/>
            <person name="Wilming L.G."/>
            <person name="Aidinis V."/>
            <person name="Allen J.E."/>
            <person name="Ambesi-Impiombato A."/>
            <person name="Apweiler R."/>
            <person name="Aturaliya R.N."/>
            <person name="Bailey T.L."/>
            <person name="Bansal M."/>
            <person name="Baxter L."/>
            <person name="Beisel K.W."/>
            <person name="Bersano T."/>
            <person name="Bono H."/>
            <person name="Chalk A.M."/>
            <person name="Chiu K.P."/>
            <person name="Choudhary V."/>
            <person name="Christoffels A."/>
            <person name="Clutterbuck D.R."/>
            <person name="Crowe M.L."/>
            <person name="Dalla E."/>
            <person name="Dalrymple B.P."/>
            <person name="de Bono B."/>
            <person name="Della Gatta G."/>
            <person name="di Bernardo D."/>
            <person name="Down T."/>
            <person name="Engstrom P."/>
            <person name="Fagiolini M."/>
            <person name="Faulkner G."/>
            <person name="Fletcher C.F."/>
            <person name="Fukushima T."/>
            <person name="Furuno M."/>
            <person name="Futaki S."/>
            <person name="Gariboldi M."/>
            <person name="Georgii-Hemming P."/>
            <person name="Gingeras T.R."/>
            <person name="Gojobori T."/>
            <person name="Green R.E."/>
            <person name="Gustincich S."/>
            <person name="Harbers M."/>
            <person name="Hayashi Y."/>
            <person name="Hensch T.K."/>
            <person name="Hirokawa N."/>
            <person name="Hill D."/>
            <person name="Huminiecki L."/>
            <person name="Iacono M."/>
            <person name="Ikeo K."/>
            <person name="Iwama A."/>
            <person name="Ishikawa T."/>
            <person name="Jakt M."/>
            <person name="Kanapin A."/>
            <person name="Katoh M."/>
            <person name="Kawasawa Y."/>
            <person name="Kelso J."/>
            <person name="Kitamura H."/>
            <person name="Kitano H."/>
            <person name="Kollias G."/>
            <person name="Krishnan S.P."/>
            <person name="Kruger A."/>
            <person name="Kummerfeld S.K."/>
            <person name="Kurochkin I.V."/>
            <person name="Lareau L.F."/>
            <person name="Lazarevic D."/>
            <person name="Lipovich L."/>
            <person name="Liu J."/>
            <person name="Liuni S."/>
            <person name="McWilliam S."/>
            <person name="Madan Babu M."/>
            <person name="Madera M."/>
            <person name="Marchionni L."/>
            <person name="Matsuda H."/>
            <person name="Matsuzawa S."/>
            <person name="Miki H."/>
            <person name="Mignone F."/>
            <person name="Miyake S."/>
            <person name="Morris K."/>
            <person name="Mottagui-Tabar S."/>
            <person name="Mulder N."/>
            <person name="Nakano N."/>
            <person name="Nakauchi H."/>
            <person name="Ng P."/>
            <person name="Nilsson R."/>
            <person name="Nishiguchi S."/>
            <person name="Nishikawa S."/>
            <person name="Nori F."/>
            <person name="Ohara O."/>
            <person name="Okazaki Y."/>
            <person name="Orlando V."/>
            <person name="Pang K.C."/>
            <person name="Pavan W.J."/>
            <person name="Pavesi G."/>
            <person name="Pesole G."/>
            <person name="Petrovsky N."/>
            <person name="Piazza S."/>
            <person name="Reed J."/>
            <person name="Reid J.F."/>
            <person name="Ring B.Z."/>
            <person name="Ringwald M."/>
            <person name="Rost B."/>
            <person name="Ruan Y."/>
            <person name="Salzberg S.L."/>
            <person name="Sandelin A."/>
            <person name="Schneider C."/>
            <person name="Schoenbach C."/>
            <person name="Sekiguchi K."/>
            <person name="Semple C.A."/>
            <person name="Seno S."/>
            <person name="Sessa L."/>
            <person name="Sheng Y."/>
            <person name="Shibata Y."/>
            <person name="Shimada H."/>
            <person name="Shimada K."/>
            <person name="Silva D."/>
            <person name="Sinclair B."/>
            <person name="Sperling S."/>
            <person name="Stupka E."/>
            <person name="Sugiura K."/>
            <person name="Sultana R."/>
            <person name="Takenaka Y."/>
            <person name="Taki K."/>
            <person name="Tammoja K."/>
            <person name="Tan S.L."/>
            <person name="Tang S."/>
            <person name="Taylor M.S."/>
            <person name="Tegner J."/>
            <person name="Teichmann S.A."/>
            <person name="Ueda H.R."/>
            <person name="van Nimwegen E."/>
            <person name="Verardo R."/>
            <person name="Wei C.L."/>
            <person name="Yagi K."/>
            <person name="Yamanishi H."/>
            <person name="Zabarovsky E."/>
            <person name="Zhu S."/>
            <person name="Zimmer A."/>
            <person name="Hide W."/>
            <person name="Bult C."/>
            <person name="Grimmond S.M."/>
            <person name="Teasdale R.D."/>
            <person name="Liu E.T."/>
            <person name="Brusic V."/>
            <person name="Quackenbush J."/>
            <person name="Wahlestedt C."/>
            <person name="Mattick J.S."/>
            <person name="Hume D.A."/>
            <person name="Kai C."/>
            <person name="Sasaki D."/>
            <person name="Tomaru Y."/>
            <person name="Fukuda S."/>
            <person name="Kanamori-Katayama M."/>
            <person name="Suzuki M."/>
            <person name="Aoki J."/>
            <person name="Arakawa T."/>
            <person name="Iida J."/>
            <person name="Imamura K."/>
            <person name="Itoh M."/>
            <person name="Kato T."/>
            <person name="Kawaji H."/>
            <person name="Kawagashira N."/>
            <person name="Kawashima T."/>
            <person name="Kojima M."/>
            <person name="Kondo S."/>
            <person name="Konno H."/>
            <person name="Nakano K."/>
            <person name="Ninomiya N."/>
            <person name="Nishio T."/>
            <person name="Okada M."/>
            <person name="Plessy C."/>
            <person name="Shibata K."/>
            <person name="Shiraki T."/>
            <person name="Suzuki S."/>
            <person name="Tagami M."/>
            <person name="Waki K."/>
            <person name="Watahiki A."/>
            <person name="Okamura-Oho Y."/>
            <person name="Suzuki H."/>
            <person name="Kawai J."/>
            <person name="Hayashizaki Y."/>
        </authorList>
    </citation>
    <scope>NUCLEOTIDE SEQUENCE [LARGE SCALE MRNA]</scope>
    <source>
        <strain>C57BL/6J</strain>
        <tissue>Bone marrow</tissue>
    </source>
</reference>
<reference key="2">
    <citation type="journal article" date="2004" name="Genome Res.">
        <title>The status, quality, and expansion of the NIH full-length cDNA project: the Mammalian Gene Collection (MGC).</title>
        <authorList>
            <consortium name="The MGC Project Team"/>
        </authorList>
    </citation>
    <scope>NUCLEOTIDE SEQUENCE [LARGE SCALE MRNA]</scope>
    <source>
        <strain>C57BL/6J</strain>
        <tissue>Olfactory epithelium</tissue>
    </source>
</reference>
<reference key="3">
    <citation type="journal article" date="1996" name="Biochem. Biophys. Res. Commun.">
        <title>The mouse genes for the EP1 prostanoid receptor and the PKN protein kinase overlap.</title>
        <authorList>
            <person name="Batshake B."/>
            <person name="Sundelin S."/>
        </authorList>
    </citation>
    <scope>NUCLEOTIDE SEQUENCE [GENOMIC DNA] OF 664-946</scope>
    <source>
        <strain>129</strain>
    </source>
</reference>
<reference key="4">
    <citation type="journal article" date="1996" name="Science">
        <title>Identification of a putative target for Rho as the serine-threonine kinase protein kinase N.</title>
        <authorList>
            <person name="Amano M."/>
            <person name="Mukai H."/>
            <person name="Ono Y."/>
            <person name="Chihara K."/>
            <person name="Matsui T."/>
            <person name="Hamajima Y."/>
            <person name="Okawa K."/>
            <person name="Iwamatsu A."/>
            <person name="Kaibuchi K."/>
        </authorList>
    </citation>
    <scope>ACTIVITY REGULATION</scope>
    <scope>INTERACTION WITH RHOA</scope>
</reference>
<reference key="5">
    <citation type="journal article" date="2000" name="Gene">
        <title>Cloning and characterization of AWP1, a novel protein that associates with serine/threonine kinase PRK1 in vivo.</title>
        <authorList>
            <person name="Duan W."/>
            <person name="Sun B."/>
            <person name="Li T.W."/>
            <person name="Tan B.J."/>
            <person name="Lee M.K."/>
            <person name="Teo T.S."/>
        </authorList>
    </citation>
    <scope>INTERACTION WITH ZFAND6</scope>
    <source>
        <tissue>Liver</tissue>
        <tissue>Mammary gland</tissue>
        <tissue>Uterus</tissue>
    </source>
</reference>
<reference key="6">
    <citation type="journal article" date="2004" name="Mol. Cell. Proteomics">
        <title>Phosphoproteomic analysis of the developing mouse brain.</title>
        <authorList>
            <person name="Ballif B.A."/>
            <person name="Villen J."/>
            <person name="Beausoleil S.A."/>
            <person name="Schwartz D."/>
            <person name="Gygi S.P."/>
        </authorList>
    </citation>
    <scope>IDENTIFICATION BY MASS SPECTROMETRY [LARGE SCALE ANALYSIS]</scope>
    <source>
        <tissue>Embryonic brain</tissue>
    </source>
</reference>
<reference key="7">
    <citation type="journal article" date="2009" name="Immunity">
        <title>The phagosomal proteome in interferon-gamma-activated macrophages.</title>
        <authorList>
            <person name="Trost M."/>
            <person name="English L."/>
            <person name="Lemieux S."/>
            <person name="Courcelles M."/>
            <person name="Desjardins M."/>
            <person name="Thibault P."/>
        </authorList>
    </citation>
    <scope>PHOSPHORYLATION [LARGE SCALE ANALYSIS] AT SER-920</scope>
    <scope>IDENTIFICATION BY MASS SPECTROMETRY [LARGE SCALE ANALYSIS]</scope>
</reference>
<reference key="8">
    <citation type="journal article" date="2010" name="Cell">
        <title>A tissue-specific atlas of mouse protein phosphorylation and expression.</title>
        <authorList>
            <person name="Huttlin E.L."/>
            <person name="Jedrychowski M.P."/>
            <person name="Elias J.E."/>
            <person name="Goswami T."/>
            <person name="Rad R."/>
            <person name="Beausoleil S.A."/>
            <person name="Villen J."/>
            <person name="Haas W."/>
            <person name="Sowa M.E."/>
            <person name="Gygi S.P."/>
        </authorList>
    </citation>
    <scope>PHOSPHORYLATION [LARGE SCALE ANALYSIS] AT SER-536; SER-540; THR-918 AND SER-920</scope>
    <scope>IDENTIFICATION BY MASS SPECTROMETRY [LARGE SCALE ANALYSIS]</scope>
    <source>
        <tissue>Brain</tissue>
        <tissue>Brown adipose tissue</tissue>
        <tissue>Heart</tissue>
        <tissue>Kidney</tissue>
        <tissue>Liver</tissue>
        <tissue>Lung</tissue>
        <tissue>Pancreas</tissue>
        <tissue>Spleen</tissue>
        <tissue>Testis</tissue>
    </source>
</reference>
<name>PKN1_MOUSE</name>
<dbReference type="EC" id="2.7.11.13" evidence="2"/>
<dbReference type="EMBL" id="AK089431">
    <property type="protein sequence ID" value="BAC40880.2"/>
    <property type="molecule type" value="mRNA"/>
</dbReference>
<dbReference type="EMBL" id="AK149649">
    <property type="protein sequence ID" value="BAE29005.1"/>
    <property type="molecule type" value="mRNA"/>
</dbReference>
<dbReference type="EMBL" id="BC052923">
    <property type="protein sequence ID" value="AAH52923.1"/>
    <property type="molecule type" value="mRNA"/>
</dbReference>
<dbReference type="EMBL" id="Y07611">
    <property type="protein sequence ID" value="CAA68883.1"/>
    <property type="molecule type" value="Genomic_DNA"/>
</dbReference>
<dbReference type="CCDS" id="CCDS22459.1">
    <molecule id="P70268-1"/>
</dbReference>
<dbReference type="CCDS" id="CCDS57627.1">
    <molecule id="P70268-2"/>
</dbReference>
<dbReference type="PIR" id="PC4220">
    <property type="entry name" value="PC4220"/>
</dbReference>
<dbReference type="RefSeq" id="NP_001186522.1">
    <molecule id="P70268-2"/>
    <property type="nucleotide sequence ID" value="NM_001199593.1"/>
</dbReference>
<dbReference type="RefSeq" id="NP_796236.2">
    <molecule id="P70268-1"/>
    <property type="nucleotide sequence ID" value="NM_177262.4"/>
</dbReference>
<dbReference type="RefSeq" id="XP_030099481.1">
    <molecule id="P70268-2"/>
    <property type="nucleotide sequence ID" value="XM_030243621.2"/>
</dbReference>
<dbReference type="SMR" id="P70268"/>
<dbReference type="BioGRID" id="236296">
    <property type="interactions" value="6"/>
</dbReference>
<dbReference type="FunCoup" id="P70268">
    <property type="interactions" value="2290"/>
</dbReference>
<dbReference type="IntAct" id="P70268">
    <property type="interactions" value="3"/>
</dbReference>
<dbReference type="STRING" id="10090.ENSMUSP00000116235"/>
<dbReference type="GlyGen" id="P70268">
    <property type="glycosylation" value="2 sites, 1 N-linked glycan (1 site), 1 O-linked glycan (1 site)"/>
</dbReference>
<dbReference type="iPTMnet" id="P70268"/>
<dbReference type="PhosphoSitePlus" id="P70268"/>
<dbReference type="SwissPalm" id="P70268"/>
<dbReference type="jPOST" id="P70268"/>
<dbReference type="PaxDb" id="10090-ENSMUSP00000005616"/>
<dbReference type="PeptideAtlas" id="P70268"/>
<dbReference type="ProteomicsDB" id="289751">
    <molecule id="P70268-1"/>
</dbReference>
<dbReference type="ProteomicsDB" id="289752">
    <molecule id="P70268-2"/>
</dbReference>
<dbReference type="Pumba" id="P70268"/>
<dbReference type="Antibodypedia" id="1296">
    <property type="antibodies" value="249 antibodies from 35 providers"/>
</dbReference>
<dbReference type="DNASU" id="320795"/>
<dbReference type="Ensembl" id="ENSMUST00000005616.16">
    <molecule id="P70268-1"/>
    <property type="protein sequence ID" value="ENSMUSP00000005616.9"/>
    <property type="gene ID" value="ENSMUSG00000057672.17"/>
</dbReference>
<dbReference type="Ensembl" id="ENSMUST00000144258.8">
    <molecule id="P70268-2"/>
    <property type="protein sequence ID" value="ENSMUSP00000116235.2"/>
    <property type="gene ID" value="ENSMUSG00000057672.17"/>
</dbReference>
<dbReference type="GeneID" id="320795"/>
<dbReference type="KEGG" id="mmu:320795"/>
<dbReference type="UCSC" id="uc009mkw.2">
    <molecule id="P70268-2"/>
    <property type="organism name" value="mouse"/>
</dbReference>
<dbReference type="UCSC" id="uc009mkx.2">
    <molecule id="P70268-1"/>
    <property type="organism name" value="mouse"/>
</dbReference>
<dbReference type="AGR" id="MGI:108022"/>
<dbReference type="CTD" id="5585"/>
<dbReference type="MGI" id="MGI:108022">
    <property type="gene designation" value="Pkn1"/>
</dbReference>
<dbReference type="VEuPathDB" id="HostDB:ENSMUSG00000057672"/>
<dbReference type="eggNOG" id="KOG0694">
    <property type="taxonomic scope" value="Eukaryota"/>
</dbReference>
<dbReference type="GeneTree" id="ENSGT00940000154990"/>
<dbReference type="HOGENOM" id="CLU_000288_132_1_1"/>
<dbReference type="InParanoid" id="P70268"/>
<dbReference type="OMA" id="CTELRIE"/>
<dbReference type="PhylomeDB" id="P70268"/>
<dbReference type="TreeFam" id="TF102005"/>
<dbReference type="Reactome" id="R-MMU-5625740">
    <property type="pathway name" value="RHO GTPases activate PKNs"/>
</dbReference>
<dbReference type="Reactome" id="R-MMU-5625886">
    <property type="pathway name" value="Activated PKN1 stimulates transcription of AR (androgen receptor) regulated genes KLK2 and KLK3"/>
</dbReference>
<dbReference type="Reactome" id="R-MMU-8980692">
    <property type="pathway name" value="RHOA GTPase cycle"/>
</dbReference>
<dbReference type="Reactome" id="R-MMU-9013026">
    <property type="pathway name" value="RHOB GTPase cycle"/>
</dbReference>
<dbReference type="Reactome" id="R-MMU-9013106">
    <property type="pathway name" value="RHOC GTPase cycle"/>
</dbReference>
<dbReference type="Reactome" id="R-MMU-9013149">
    <property type="pathway name" value="RAC1 GTPase cycle"/>
</dbReference>
<dbReference type="BioGRID-ORCS" id="320795">
    <property type="hits" value="8 hits in 81 CRISPR screens"/>
</dbReference>
<dbReference type="ChiTaRS" id="Pkn1">
    <property type="organism name" value="mouse"/>
</dbReference>
<dbReference type="PRO" id="PR:P70268"/>
<dbReference type="Proteomes" id="UP000000589">
    <property type="component" value="Chromosome 8"/>
</dbReference>
<dbReference type="RNAct" id="P70268">
    <property type="molecule type" value="protein"/>
</dbReference>
<dbReference type="Bgee" id="ENSMUSG00000057672">
    <property type="expression patterns" value="Expressed in granulocyte and 231 other cell types or tissues"/>
</dbReference>
<dbReference type="ExpressionAtlas" id="P70268">
    <property type="expression patterns" value="baseline and differential"/>
</dbReference>
<dbReference type="GO" id="GO:0032154">
    <property type="term" value="C:cleavage furrow"/>
    <property type="evidence" value="ECO:0000250"/>
    <property type="project" value="UniProtKB"/>
</dbReference>
<dbReference type="GO" id="GO:0005737">
    <property type="term" value="C:cytoplasm"/>
    <property type="evidence" value="ECO:0000314"/>
    <property type="project" value="MGI"/>
</dbReference>
<dbReference type="GO" id="GO:0031410">
    <property type="term" value="C:cytoplasmic vesicle"/>
    <property type="evidence" value="ECO:0000314"/>
    <property type="project" value="MGI"/>
</dbReference>
<dbReference type="GO" id="GO:0005768">
    <property type="term" value="C:endosome"/>
    <property type="evidence" value="ECO:0000250"/>
    <property type="project" value="UniProtKB"/>
</dbReference>
<dbReference type="GO" id="GO:0030496">
    <property type="term" value="C:midbody"/>
    <property type="evidence" value="ECO:0000250"/>
    <property type="project" value="UniProtKB"/>
</dbReference>
<dbReference type="GO" id="GO:0005634">
    <property type="term" value="C:nucleus"/>
    <property type="evidence" value="ECO:0000250"/>
    <property type="project" value="UniProtKB"/>
</dbReference>
<dbReference type="GO" id="GO:0032991">
    <property type="term" value="C:protein-containing complex"/>
    <property type="evidence" value="ECO:0000266"/>
    <property type="project" value="MGI"/>
</dbReference>
<dbReference type="GO" id="GO:0005524">
    <property type="term" value="F:ATP binding"/>
    <property type="evidence" value="ECO:0007669"/>
    <property type="project" value="UniProtKB-KW"/>
</dbReference>
<dbReference type="GO" id="GO:0003682">
    <property type="term" value="F:chromatin binding"/>
    <property type="evidence" value="ECO:0000250"/>
    <property type="project" value="UniProtKB"/>
</dbReference>
<dbReference type="GO" id="GO:0004697">
    <property type="term" value="F:diacylglycerol-dependent serine/threonine kinase activity"/>
    <property type="evidence" value="ECO:0007669"/>
    <property type="project" value="UniProtKB-EC"/>
</dbReference>
<dbReference type="GO" id="GO:0042393">
    <property type="term" value="F:histone binding"/>
    <property type="evidence" value="ECO:0000250"/>
    <property type="project" value="UniProtKB"/>
</dbReference>
<dbReference type="GO" id="GO:0042826">
    <property type="term" value="F:histone deacetylase binding"/>
    <property type="evidence" value="ECO:0000250"/>
    <property type="project" value="UniProtKB"/>
</dbReference>
<dbReference type="GO" id="GO:0035402">
    <property type="term" value="F:histone H3T11 kinase activity"/>
    <property type="evidence" value="ECO:0000250"/>
    <property type="project" value="UniProtKB"/>
</dbReference>
<dbReference type="GO" id="GO:0050681">
    <property type="term" value="F:nuclear androgen receptor binding"/>
    <property type="evidence" value="ECO:0000250"/>
    <property type="project" value="UniProtKB"/>
</dbReference>
<dbReference type="GO" id="GO:0004672">
    <property type="term" value="F:protein kinase activity"/>
    <property type="evidence" value="ECO:0000315"/>
    <property type="project" value="MGI"/>
</dbReference>
<dbReference type="GO" id="GO:0005080">
    <property type="term" value="F:protein kinase C binding"/>
    <property type="evidence" value="ECO:0007669"/>
    <property type="project" value="Ensembl"/>
</dbReference>
<dbReference type="GO" id="GO:0106310">
    <property type="term" value="F:protein serine kinase activity"/>
    <property type="evidence" value="ECO:0007669"/>
    <property type="project" value="RHEA"/>
</dbReference>
<dbReference type="GO" id="GO:0004674">
    <property type="term" value="F:protein serine/threonine kinase activity"/>
    <property type="evidence" value="ECO:0000250"/>
    <property type="project" value="UniProtKB"/>
</dbReference>
<dbReference type="GO" id="GO:0031267">
    <property type="term" value="F:small GTPase binding"/>
    <property type="evidence" value="ECO:0000250"/>
    <property type="project" value="UniProtKB"/>
</dbReference>
<dbReference type="GO" id="GO:0003713">
    <property type="term" value="F:transcription coactivator activity"/>
    <property type="evidence" value="ECO:0000250"/>
    <property type="project" value="UniProtKB"/>
</dbReference>
<dbReference type="GO" id="GO:0001783">
    <property type="term" value="P:B cell apoptotic process"/>
    <property type="evidence" value="ECO:0000315"/>
    <property type="project" value="MGI"/>
</dbReference>
<dbReference type="GO" id="GO:0001782">
    <property type="term" value="P:B cell homeostasis"/>
    <property type="evidence" value="ECO:0000315"/>
    <property type="project" value="MGI"/>
</dbReference>
<dbReference type="GO" id="GO:0010631">
    <property type="term" value="P:epithelial cell migration"/>
    <property type="evidence" value="ECO:0000250"/>
    <property type="project" value="UniProtKB"/>
</dbReference>
<dbReference type="GO" id="GO:0006972">
    <property type="term" value="P:hyperosmotic response"/>
    <property type="evidence" value="ECO:0000314"/>
    <property type="project" value="MGI"/>
</dbReference>
<dbReference type="GO" id="GO:0030889">
    <property type="term" value="P:negative regulation of B cell proliferation"/>
    <property type="evidence" value="ECO:0000315"/>
    <property type="project" value="MGI"/>
</dbReference>
<dbReference type="GO" id="GO:0043687">
    <property type="term" value="P:post-translational protein modification"/>
    <property type="evidence" value="ECO:0000250"/>
    <property type="project" value="UniProtKB"/>
</dbReference>
<dbReference type="GO" id="GO:2000145">
    <property type="term" value="P:regulation of cell motility"/>
    <property type="evidence" value="ECO:0000250"/>
    <property type="project" value="UniProtKB"/>
</dbReference>
<dbReference type="GO" id="GO:0002634">
    <property type="term" value="P:regulation of germinal center formation"/>
    <property type="evidence" value="ECO:0000315"/>
    <property type="project" value="MGI"/>
</dbReference>
<dbReference type="GO" id="GO:0002637">
    <property type="term" value="P:regulation of immunoglobulin production"/>
    <property type="evidence" value="ECO:0000315"/>
    <property type="project" value="MGI"/>
</dbReference>
<dbReference type="GO" id="GO:0006357">
    <property type="term" value="P:regulation of transcription by RNA polymerase II"/>
    <property type="evidence" value="ECO:0000250"/>
    <property type="project" value="UniProtKB"/>
</dbReference>
<dbReference type="GO" id="GO:0003014">
    <property type="term" value="P:renal system process"/>
    <property type="evidence" value="ECO:0000315"/>
    <property type="project" value="MGI"/>
</dbReference>
<dbReference type="GO" id="GO:0007165">
    <property type="term" value="P:signal transduction"/>
    <property type="evidence" value="ECO:0007669"/>
    <property type="project" value="InterPro"/>
</dbReference>
<dbReference type="GO" id="GO:0048536">
    <property type="term" value="P:spleen development"/>
    <property type="evidence" value="ECO:0000315"/>
    <property type="project" value="MGI"/>
</dbReference>
<dbReference type="CDD" id="cd08687">
    <property type="entry name" value="C2_PKN-like"/>
    <property type="match status" value="1"/>
</dbReference>
<dbReference type="CDD" id="cd11630">
    <property type="entry name" value="HR1_PKN1_2"/>
    <property type="match status" value="1"/>
</dbReference>
<dbReference type="CDD" id="cd11622">
    <property type="entry name" value="HR1_PKN_1"/>
    <property type="match status" value="1"/>
</dbReference>
<dbReference type="CDD" id="cd05589">
    <property type="entry name" value="STKc_PKN"/>
    <property type="match status" value="1"/>
</dbReference>
<dbReference type="FunFam" id="1.10.287.160:FF:000001">
    <property type="entry name" value="Putative serine/threonine-protein kinase N2"/>
    <property type="match status" value="1"/>
</dbReference>
<dbReference type="FunFam" id="1.10.287.160:FF:000002">
    <property type="entry name" value="Putative serine/threonine-protein kinase N2"/>
    <property type="match status" value="1"/>
</dbReference>
<dbReference type="FunFam" id="1.10.287.160:FF:000003">
    <property type="entry name" value="Putative serine/threonine-protein kinase N2"/>
    <property type="match status" value="1"/>
</dbReference>
<dbReference type="FunFam" id="3.30.200.20:FF:000058">
    <property type="entry name" value="Putative serine/threonine-protein kinase N2"/>
    <property type="match status" value="1"/>
</dbReference>
<dbReference type="FunFam" id="1.10.510.10:FF:000038">
    <property type="entry name" value="serine/threonine-protein kinase N2 isoform X1"/>
    <property type="match status" value="1"/>
</dbReference>
<dbReference type="Gene3D" id="1.10.287.160">
    <property type="entry name" value="HR1 repeat"/>
    <property type="match status" value="3"/>
</dbReference>
<dbReference type="Gene3D" id="3.30.200.20">
    <property type="entry name" value="Phosphorylase Kinase, domain 1"/>
    <property type="match status" value="1"/>
</dbReference>
<dbReference type="Gene3D" id="1.10.510.10">
    <property type="entry name" value="Transferase(Phosphotransferase) domain 1"/>
    <property type="match status" value="1"/>
</dbReference>
<dbReference type="InterPro" id="IPR000961">
    <property type="entry name" value="AGC-kinase_C"/>
</dbReference>
<dbReference type="InterPro" id="IPR000008">
    <property type="entry name" value="C2_dom"/>
</dbReference>
<dbReference type="InterPro" id="IPR035892">
    <property type="entry name" value="C2_domain_sf"/>
</dbReference>
<dbReference type="InterPro" id="IPR037784">
    <property type="entry name" value="C2_PKN"/>
</dbReference>
<dbReference type="InterPro" id="IPR011072">
    <property type="entry name" value="HR1_rho-bd"/>
</dbReference>
<dbReference type="InterPro" id="IPR036274">
    <property type="entry name" value="HR1_rpt_sf"/>
</dbReference>
<dbReference type="InterPro" id="IPR011009">
    <property type="entry name" value="Kinase-like_dom_sf"/>
</dbReference>
<dbReference type="InterPro" id="IPR017892">
    <property type="entry name" value="Pkinase_C"/>
</dbReference>
<dbReference type="InterPro" id="IPR037317">
    <property type="entry name" value="PKN1_HR1_2"/>
</dbReference>
<dbReference type="InterPro" id="IPR037313">
    <property type="entry name" value="PKN_HR1_1"/>
</dbReference>
<dbReference type="InterPro" id="IPR000719">
    <property type="entry name" value="Prot_kinase_dom"/>
</dbReference>
<dbReference type="InterPro" id="IPR017441">
    <property type="entry name" value="Protein_kinase_ATP_BS"/>
</dbReference>
<dbReference type="InterPro" id="IPR008271">
    <property type="entry name" value="Ser/Thr_kinase_AS"/>
</dbReference>
<dbReference type="PANTHER" id="PTHR24351">
    <property type="entry name" value="RIBOSOMAL PROTEIN S6 KINASE"/>
    <property type="match status" value="1"/>
</dbReference>
<dbReference type="Pfam" id="PF02185">
    <property type="entry name" value="HR1"/>
    <property type="match status" value="3"/>
</dbReference>
<dbReference type="Pfam" id="PF00069">
    <property type="entry name" value="Pkinase"/>
    <property type="match status" value="1"/>
</dbReference>
<dbReference type="Pfam" id="PF00433">
    <property type="entry name" value="Pkinase_C"/>
    <property type="match status" value="1"/>
</dbReference>
<dbReference type="SMART" id="SM00742">
    <property type="entry name" value="Hr1"/>
    <property type="match status" value="3"/>
</dbReference>
<dbReference type="SMART" id="SM00133">
    <property type="entry name" value="S_TK_X"/>
    <property type="match status" value="1"/>
</dbReference>
<dbReference type="SMART" id="SM00220">
    <property type="entry name" value="S_TKc"/>
    <property type="match status" value="1"/>
</dbReference>
<dbReference type="SUPFAM" id="SSF49562">
    <property type="entry name" value="C2 domain (Calcium/lipid-binding domain, CaLB)"/>
    <property type="match status" value="1"/>
</dbReference>
<dbReference type="SUPFAM" id="SSF46585">
    <property type="entry name" value="HR1 repeat"/>
    <property type="match status" value="3"/>
</dbReference>
<dbReference type="SUPFAM" id="SSF56112">
    <property type="entry name" value="Protein kinase-like (PK-like)"/>
    <property type="match status" value="1"/>
</dbReference>
<dbReference type="PROSITE" id="PS51285">
    <property type="entry name" value="AGC_KINASE_CTER"/>
    <property type="match status" value="1"/>
</dbReference>
<dbReference type="PROSITE" id="PS50004">
    <property type="entry name" value="C2"/>
    <property type="match status" value="1"/>
</dbReference>
<dbReference type="PROSITE" id="PS00107">
    <property type="entry name" value="PROTEIN_KINASE_ATP"/>
    <property type="match status" value="1"/>
</dbReference>
<dbReference type="PROSITE" id="PS50011">
    <property type="entry name" value="PROTEIN_KINASE_DOM"/>
    <property type="match status" value="1"/>
</dbReference>
<dbReference type="PROSITE" id="PS00108">
    <property type="entry name" value="PROTEIN_KINASE_ST"/>
    <property type="match status" value="1"/>
</dbReference>
<dbReference type="PROSITE" id="PS51860">
    <property type="entry name" value="REM_1"/>
    <property type="match status" value="3"/>
</dbReference>
<protein>
    <recommendedName>
        <fullName>Serine/threonine-protein kinase N1</fullName>
        <ecNumber evidence="2">2.7.11.13</ecNumber>
    </recommendedName>
    <alternativeName>
        <fullName>Protein kinase C-like 1</fullName>
    </alternativeName>
    <alternativeName>
        <fullName>Protein kinase C-like PKN</fullName>
    </alternativeName>
    <alternativeName>
        <fullName>Protein-kinase C-related kinase 1</fullName>
    </alternativeName>
    <alternativeName>
        <fullName>Serine-threonine protein kinase N</fullName>
    </alternativeName>
</protein>
<gene>
    <name type="primary">Pkn1</name>
    <name type="synonym">Pkn</name>
    <name type="synonym">Prk1</name>
    <name type="synonym">Prkcl1</name>
</gene>
<evidence type="ECO:0000250" key="1"/>
<evidence type="ECO:0000250" key="2">
    <source>
        <dbReference type="UniProtKB" id="Q16512"/>
    </source>
</evidence>
<evidence type="ECO:0000250" key="3">
    <source>
        <dbReference type="UniProtKB" id="Q63433"/>
    </source>
</evidence>
<evidence type="ECO:0000255" key="4">
    <source>
        <dbReference type="PROSITE-ProRule" id="PRU00041"/>
    </source>
</evidence>
<evidence type="ECO:0000255" key="5">
    <source>
        <dbReference type="PROSITE-ProRule" id="PRU00159"/>
    </source>
</evidence>
<evidence type="ECO:0000255" key="6">
    <source>
        <dbReference type="PROSITE-ProRule" id="PRU00618"/>
    </source>
</evidence>
<evidence type="ECO:0000255" key="7">
    <source>
        <dbReference type="PROSITE-ProRule" id="PRU01207"/>
    </source>
</evidence>
<evidence type="ECO:0000255" key="8">
    <source>
        <dbReference type="PROSITE-ProRule" id="PRU10027"/>
    </source>
</evidence>
<evidence type="ECO:0000256" key="9">
    <source>
        <dbReference type="SAM" id="MobiDB-lite"/>
    </source>
</evidence>
<evidence type="ECO:0000269" key="10">
    <source>
    </source>
</evidence>
<evidence type="ECO:0000269" key="11">
    <source>
    </source>
</evidence>
<evidence type="ECO:0000305" key="12"/>
<evidence type="ECO:0007744" key="13">
    <source>
    </source>
</evidence>
<evidence type="ECO:0007744" key="14">
    <source>
    </source>
</evidence>
<feature type="initiator methionine" description="Removed" evidence="2">
    <location>
        <position position="1"/>
    </location>
</feature>
<feature type="chain" id="PRO_0000055720" description="Serine/threonine-protein kinase N1">
    <location>
        <begin position="2"/>
        <end position="946"/>
    </location>
</feature>
<feature type="domain" description="REM-1 1" evidence="7">
    <location>
        <begin position="25"/>
        <end position="100"/>
    </location>
</feature>
<feature type="domain" description="REM-1 2" evidence="7">
    <location>
        <begin position="114"/>
        <end position="193"/>
    </location>
</feature>
<feature type="domain" description="REM-1 3" evidence="7">
    <location>
        <begin position="202"/>
        <end position="283"/>
    </location>
</feature>
<feature type="domain" description="C2" evidence="4">
    <location>
        <begin position="310"/>
        <end position="473"/>
    </location>
</feature>
<feature type="domain" description="Protein kinase" evidence="5">
    <location>
        <begin position="619"/>
        <end position="878"/>
    </location>
</feature>
<feature type="domain" description="AGC-kinase C-terminal" evidence="6">
    <location>
        <begin position="879"/>
        <end position="946"/>
    </location>
</feature>
<feature type="region of interest" description="Disordered" evidence="9">
    <location>
        <begin position="345"/>
        <end position="387"/>
    </location>
</feature>
<feature type="region of interest" description="Disordered" evidence="9">
    <location>
        <begin position="557"/>
        <end position="607"/>
    </location>
</feature>
<feature type="region of interest" description="Disordered" evidence="9">
    <location>
        <begin position="906"/>
        <end position="925"/>
    </location>
</feature>
<feature type="compositionally biased region" description="Low complexity" evidence="9">
    <location>
        <begin position="369"/>
        <end position="385"/>
    </location>
</feature>
<feature type="compositionally biased region" description="Low complexity" evidence="9">
    <location>
        <begin position="574"/>
        <end position="601"/>
    </location>
</feature>
<feature type="active site" description="Proton acceptor" evidence="5 8">
    <location>
        <position position="744"/>
    </location>
</feature>
<feature type="binding site" evidence="5">
    <location>
        <begin position="625"/>
        <end position="633"/>
    </location>
    <ligand>
        <name>ATP</name>
        <dbReference type="ChEBI" id="CHEBI:30616"/>
    </ligand>
</feature>
<feature type="binding site" evidence="5">
    <location>
        <position position="648"/>
    </location>
    <ligand>
        <name>ATP</name>
        <dbReference type="ChEBI" id="CHEBI:30616"/>
    </ligand>
</feature>
<feature type="site" description="Cleavage; by caspase-3" evidence="1">
    <location>
        <begin position="108"/>
        <end position="109"/>
    </location>
</feature>
<feature type="site" description="Cleavage; by caspase-3" evidence="1">
    <location>
        <begin position="457"/>
        <end position="458"/>
    </location>
</feature>
<feature type="site" description="Cleavage; by caspase-3" evidence="1">
    <location>
        <begin position="561"/>
        <end position="562"/>
    </location>
</feature>
<feature type="modified residue" description="N-acetylalanine" evidence="2">
    <location>
        <position position="2"/>
    </location>
</feature>
<feature type="modified residue" description="Phosphoserine" evidence="2">
    <location>
        <position position="69"/>
    </location>
</feature>
<feature type="modified residue" description="Phosphoserine" evidence="3">
    <location>
        <position position="377"/>
    </location>
</feature>
<feature type="modified residue" description="N6-acetyllysine" evidence="2">
    <location>
        <position position="451"/>
    </location>
</feature>
<feature type="modified residue" description="Phosphoserine" evidence="14">
    <location>
        <position position="536"/>
    </location>
</feature>
<feature type="modified residue" description="Phosphoserine" evidence="14">
    <location>
        <position position="540"/>
    </location>
</feature>
<feature type="modified residue" description="Phosphoserine" evidence="2">
    <location>
        <position position="562"/>
    </location>
</feature>
<feature type="modified residue" description="Phosphoserine" evidence="2">
    <location>
        <position position="565"/>
    </location>
</feature>
<feature type="modified residue" description="Phosphoserine" evidence="2">
    <location>
        <position position="612"/>
    </location>
</feature>
<feature type="modified residue" description="Phosphothreonine; by PDPK1" evidence="2">
    <location>
        <position position="778"/>
    </location>
</feature>
<feature type="modified residue" description="Phosphothreonine" evidence="2">
    <location>
        <position position="782"/>
    </location>
</feature>
<feature type="modified residue" description="Phosphothreonine" evidence="14">
    <location>
        <position position="918"/>
    </location>
</feature>
<feature type="modified residue" description="Phosphoserine" evidence="13 14">
    <location>
        <position position="920"/>
    </location>
</feature>
<feature type="splice variant" id="VSP_039223" description="In isoform 2." evidence="12">
    <original>MAGDAVQ</original>
    <variation>MAADPPLDSELE</variation>
    <location>
        <begin position="1"/>
        <end position="7"/>
    </location>
</feature>
<keyword id="KW-0007">Acetylation</keyword>
<keyword id="KW-0025">Alternative splicing</keyword>
<keyword id="KW-0067">ATP-binding</keyword>
<keyword id="KW-1003">Cell membrane</keyword>
<keyword id="KW-0156">Chromatin regulator</keyword>
<keyword id="KW-0175">Coiled coil</keyword>
<keyword id="KW-0963">Cytoplasm</keyword>
<keyword id="KW-0967">Endosome</keyword>
<keyword id="KW-0418">Kinase</keyword>
<keyword id="KW-0472">Membrane</keyword>
<keyword id="KW-0547">Nucleotide-binding</keyword>
<keyword id="KW-0539">Nucleus</keyword>
<keyword id="KW-0597">Phosphoprotein</keyword>
<keyword id="KW-1185">Reference proteome</keyword>
<keyword id="KW-0677">Repeat</keyword>
<keyword id="KW-0723">Serine/threonine-protein kinase</keyword>
<keyword id="KW-0804">Transcription</keyword>
<keyword id="KW-0805">Transcription regulation</keyword>
<keyword id="KW-0808">Transferase</keyword>
<comment type="function">
    <text evidence="2">PKC-related serine/threonine-protein kinase involved in various processes such as regulation of the intermediate filaments of the actin cytoskeleton, cell migration, tumor cell invasion and transcription regulation. Part of a signaling cascade that begins with the activation of the adrenergic receptor ADRA1B and leads to the activation of MAPK14. Regulates the cytoskeletal network by phosphorylating proteins such as VIM and neurofilament proteins NEFH, NEFL and NEFM, leading to inhibit their polymerization. Phosphorylates 'Ser-575', 'Ser-637' and 'Ser-669' of MAPT/Tau, lowering its ability to bind to microtubules, resulting in disruption of tubulin assembly. Acts as a key coactivator of androgen receptor (ANDR)-dependent transcription, by being recruited to ANDR target genes and specifically mediating phosphorylation of 'Thr-11' of histone H3 (H3T11ph), a specific tag for epigenetic transcriptional activation that promotes demethylation of histone H3 'Lys-9' (H3K9me) by KDM4C/JMJD2C. Phosphorylates HDAC5, HDAC7 and HDAC9, leading to impair their import in the nucleus. Phosphorylates 'Thr-38' of PPP1R14A, 'Ser-159', 'Ser-163' and 'Ser-170' of MARCKS, and GFAP. Able to phosphorylate RPS6 in vitro.</text>
</comment>
<comment type="catalytic activity">
    <reaction evidence="2">
        <text>L-seryl-[protein] + ATP = O-phospho-L-seryl-[protein] + ADP + H(+)</text>
        <dbReference type="Rhea" id="RHEA:17989"/>
        <dbReference type="Rhea" id="RHEA-COMP:9863"/>
        <dbReference type="Rhea" id="RHEA-COMP:11604"/>
        <dbReference type="ChEBI" id="CHEBI:15378"/>
        <dbReference type="ChEBI" id="CHEBI:29999"/>
        <dbReference type="ChEBI" id="CHEBI:30616"/>
        <dbReference type="ChEBI" id="CHEBI:83421"/>
        <dbReference type="ChEBI" id="CHEBI:456216"/>
        <dbReference type="EC" id="2.7.11.13"/>
    </reaction>
</comment>
<comment type="catalytic activity">
    <reaction evidence="2">
        <text>L-threonyl-[protein] + ATP = O-phospho-L-threonyl-[protein] + ADP + H(+)</text>
        <dbReference type="Rhea" id="RHEA:46608"/>
        <dbReference type="Rhea" id="RHEA-COMP:11060"/>
        <dbReference type="Rhea" id="RHEA-COMP:11605"/>
        <dbReference type="ChEBI" id="CHEBI:15378"/>
        <dbReference type="ChEBI" id="CHEBI:30013"/>
        <dbReference type="ChEBI" id="CHEBI:30616"/>
        <dbReference type="ChEBI" id="CHEBI:61977"/>
        <dbReference type="ChEBI" id="CHEBI:456216"/>
        <dbReference type="EC" id="2.7.11.13"/>
    </reaction>
</comment>
<comment type="activity regulation">
    <text evidence="11">Kinase activity is activated upon binding to Rho proteins (RHOA, RHOB and RAC1). Activated by lipids, particularly cardiolipin and to a lesser extent by other acidic phospholipids. Activated by caspase-3 (CASP3) cleavage during apoptosis. Two specific sites, Thr-778 (activation loop of the kinase domain) and Ser-920 (turn motif), need to be phosphorylated for its full activation.</text>
</comment>
<comment type="subunit">
    <text evidence="2 10 11">Interacts with ZFAND6 (PubMed:11054541). Interacts with ANDR. Interacts with PRKCB. Interacts (via REM 1 and REM 2 repeats) with RAC1 (By similarity). Interacts (via REM 1 repeat) with RHOA (PubMed:8571127). Interacts with RHOB. Interacts (via C-terminus) with PDPK1. Interacts with CCNT2; enhances MYOD1-dependent transcription. Component of a signaling complex containing at least AKAP13, PKN1, MAPK14, ZAK and MAP2K3. Within this complex, AKAP13 interacts directly with PKN1, which in turn recruits MAPK14, MAP2K3 and ZAK (By similarity).</text>
</comment>
<comment type="subcellular location">
    <subcellularLocation>
        <location evidence="2">Cytoplasm</location>
    </subcellularLocation>
    <subcellularLocation>
        <location evidence="2">Nucleus</location>
    </subcellularLocation>
    <subcellularLocation>
        <location evidence="2">Endosome</location>
    </subcellularLocation>
    <subcellularLocation>
        <location evidence="3">Cell membrane</location>
        <topology evidence="1">Peripheral membrane protein</topology>
    </subcellularLocation>
    <subcellularLocation>
        <location evidence="2">Cleavage furrow</location>
    </subcellularLocation>
    <subcellularLocation>
        <location evidence="2">Midbody</location>
    </subcellularLocation>
    <text evidence="2 3">Associates with chromatin in a ligand-dependent manner. Localization to endosomes is mediated via its interaction with RHOB. Association to the cell membrane is dependent on Ser-377 phosphorylation. Accumulates during telophase at the cleavage furrow and finally concentrates around the midbody in cytokinesis.</text>
</comment>
<comment type="alternative products">
    <event type="alternative splicing"/>
    <isoform>
        <id>P70268-1</id>
        <name>1</name>
        <sequence type="displayed"/>
    </isoform>
    <isoform>
        <id>P70268-2</id>
        <name>2</name>
        <sequence type="described" ref="VSP_039223"/>
    </isoform>
</comment>
<comment type="domain">
    <text evidence="1">The C1 domain does not bind the diacylglycerol (DAG).</text>
</comment>
<comment type="PTM">
    <text evidence="1">Autophosphorylated; preferably on serine.</text>
</comment>
<comment type="PTM">
    <text evidence="1">Activated by limited proteolysis with trypsin.</text>
</comment>
<comment type="similarity">
    <text evidence="12">Belongs to the protein kinase superfamily. AGC Ser/Thr protein kinase family. PKC subfamily.</text>
</comment>
<organism>
    <name type="scientific">Mus musculus</name>
    <name type="common">Mouse</name>
    <dbReference type="NCBI Taxonomy" id="10090"/>
    <lineage>
        <taxon>Eukaryota</taxon>
        <taxon>Metazoa</taxon>
        <taxon>Chordata</taxon>
        <taxon>Craniata</taxon>
        <taxon>Vertebrata</taxon>
        <taxon>Euteleostomi</taxon>
        <taxon>Mammalia</taxon>
        <taxon>Eutheria</taxon>
        <taxon>Euarchontoglires</taxon>
        <taxon>Glires</taxon>
        <taxon>Rodentia</taxon>
        <taxon>Myomorpha</taxon>
        <taxon>Muroidea</taxon>
        <taxon>Muridae</taxon>
        <taxon>Murinae</taxon>
        <taxon>Mus</taxon>
        <taxon>Mus</taxon>
    </lineage>
</organism>